<proteinExistence type="inferred from homology"/>
<sequence length="172" mass="20302">MSEKEKKELTQECEELKEKYKELEEYAKRLKAEYENYREEVAREKRELIKNANEYLISKLIPVLDDFERALNQGEKGDAFYEGVKMIYKKLLNVLEKEGLTKIHVGEKFDPFEHEAVERVETEDVEEYTVLEVVESGYKFHGKVLKPAKVKVAVKPRKKEAEKVEEPSDKKE</sequence>
<accession>B1LCI1</accession>
<keyword id="KW-0143">Chaperone</keyword>
<keyword id="KW-0963">Cytoplasm</keyword>
<keyword id="KW-0346">Stress response</keyword>
<comment type="function">
    <text evidence="1">Participates actively in the response to hyperosmotic and heat shock by preventing the aggregation of stress-denatured proteins, in association with DnaK and GrpE. It is the nucleotide exchange factor for DnaK and may function as a thermosensor. Unfolded proteins bind initially to DnaJ; upon interaction with the DnaJ-bound protein, DnaK hydrolyzes its bound ATP, resulting in the formation of a stable complex. GrpE releases ADP from DnaK; ATP binding to DnaK triggers the release of the substrate protein, thus completing the reaction cycle. Several rounds of ATP-dependent interactions between DnaJ, DnaK and GrpE are required for fully efficient folding.</text>
</comment>
<comment type="subunit">
    <text evidence="1">Homodimer.</text>
</comment>
<comment type="subcellular location">
    <subcellularLocation>
        <location evidence="1">Cytoplasm</location>
    </subcellularLocation>
</comment>
<comment type="similarity">
    <text evidence="1">Belongs to the GrpE family.</text>
</comment>
<protein>
    <recommendedName>
        <fullName evidence="1">Protein GrpE</fullName>
    </recommendedName>
    <alternativeName>
        <fullName evidence="1">HSP-70 cofactor</fullName>
    </alternativeName>
</protein>
<organism>
    <name type="scientific">Thermotoga sp. (strain RQ2)</name>
    <dbReference type="NCBI Taxonomy" id="126740"/>
    <lineage>
        <taxon>Bacteria</taxon>
        <taxon>Thermotogati</taxon>
        <taxon>Thermotogota</taxon>
        <taxon>Thermotogae</taxon>
        <taxon>Thermotogales</taxon>
        <taxon>Thermotogaceae</taxon>
        <taxon>Thermotoga</taxon>
    </lineage>
</organism>
<name>GRPE_THESQ</name>
<feature type="chain" id="PRO_1000137638" description="Protein GrpE">
    <location>
        <begin position="1"/>
        <end position="172"/>
    </location>
</feature>
<dbReference type="EMBL" id="CP000969">
    <property type="protein sequence ID" value="ACB08439.1"/>
    <property type="molecule type" value="Genomic_DNA"/>
</dbReference>
<dbReference type="RefSeq" id="WP_012310307.1">
    <property type="nucleotide sequence ID" value="NC_010483.1"/>
</dbReference>
<dbReference type="SMR" id="B1LCI1"/>
<dbReference type="KEGG" id="trq:TRQ2_0077"/>
<dbReference type="HOGENOM" id="CLU_057217_5_2_0"/>
<dbReference type="Proteomes" id="UP000001687">
    <property type="component" value="Chromosome"/>
</dbReference>
<dbReference type="GO" id="GO:0005737">
    <property type="term" value="C:cytoplasm"/>
    <property type="evidence" value="ECO:0007669"/>
    <property type="project" value="UniProtKB-SubCell"/>
</dbReference>
<dbReference type="GO" id="GO:0000774">
    <property type="term" value="F:adenyl-nucleotide exchange factor activity"/>
    <property type="evidence" value="ECO:0007669"/>
    <property type="project" value="InterPro"/>
</dbReference>
<dbReference type="GO" id="GO:0042803">
    <property type="term" value="F:protein homodimerization activity"/>
    <property type="evidence" value="ECO:0007669"/>
    <property type="project" value="InterPro"/>
</dbReference>
<dbReference type="GO" id="GO:0051087">
    <property type="term" value="F:protein-folding chaperone binding"/>
    <property type="evidence" value="ECO:0007669"/>
    <property type="project" value="InterPro"/>
</dbReference>
<dbReference type="GO" id="GO:0051082">
    <property type="term" value="F:unfolded protein binding"/>
    <property type="evidence" value="ECO:0007669"/>
    <property type="project" value="TreeGrafter"/>
</dbReference>
<dbReference type="GO" id="GO:0006457">
    <property type="term" value="P:protein folding"/>
    <property type="evidence" value="ECO:0007669"/>
    <property type="project" value="InterPro"/>
</dbReference>
<dbReference type="CDD" id="cd00446">
    <property type="entry name" value="GrpE"/>
    <property type="match status" value="1"/>
</dbReference>
<dbReference type="FunFam" id="2.30.22.10:FF:000001">
    <property type="entry name" value="Protein GrpE"/>
    <property type="match status" value="1"/>
</dbReference>
<dbReference type="Gene3D" id="3.90.20.20">
    <property type="match status" value="1"/>
</dbReference>
<dbReference type="Gene3D" id="2.30.22.10">
    <property type="entry name" value="Head domain of nucleotide exchange factor GrpE"/>
    <property type="match status" value="1"/>
</dbReference>
<dbReference type="HAMAP" id="MF_01151">
    <property type="entry name" value="GrpE"/>
    <property type="match status" value="1"/>
</dbReference>
<dbReference type="InterPro" id="IPR000740">
    <property type="entry name" value="GrpE"/>
</dbReference>
<dbReference type="InterPro" id="IPR013805">
    <property type="entry name" value="GrpE_coiled_coil"/>
</dbReference>
<dbReference type="InterPro" id="IPR009012">
    <property type="entry name" value="GrpE_head"/>
</dbReference>
<dbReference type="PANTHER" id="PTHR21237">
    <property type="entry name" value="GRPE PROTEIN"/>
    <property type="match status" value="1"/>
</dbReference>
<dbReference type="PANTHER" id="PTHR21237:SF23">
    <property type="entry name" value="GRPE PROTEIN HOMOLOG, MITOCHONDRIAL"/>
    <property type="match status" value="1"/>
</dbReference>
<dbReference type="Pfam" id="PF01025">
    <property type="entry name" value="GrpE"/>
    <property type="match status" value="1"/>
</dbReference>
<dbReference type="PRINTS" id="PR00773">
    <property type="entry name" value="GRPEPROTEIN"/>
</dbReference>
<dbReference type="SUPFAM" id="SSF58014">
    <property type="entry name" value="Coiled-coil domain of nucleotide exchange factor GrpE"/>
    <property type="match status" value="1"/>
</dbReference>
<dbReference type="SUPFAM" id="SSF51064">
    <property type="entry name" value="Head domain of nucleotide exchange factor GrpE"/>
    <property type="match status" value="1"/>
</dbReference>
<dbReference type="PROSITE" id="PS01071">
    <property type="entry name" value="GRPE"/>
    <property type="match status" value="1"/>
</dbReference>
<reference key="1">
    <citation type="journal article" date="2011" name="J. Bacteriol.">
        <title>Genome sequence of Thermotoga sp. strain RQ2, a hyperthermophilic bacterium isolated from a geothermally heated region of the seafloor near Ribeira Quente, the Azores.</title>
        <authorList>
            <person name="Swithers K.S."/>
            <person name="DiPippo J.L."/>
            <person name="Bruce D.C."/>
            <person name="Detter C."/>
            <person name="Tapia R."/>
            <person name="Han S."/>
            <person name="Saunders E."/>
            <person name="Goodwin L.A."/>
            <person name="Han J."/>
            <person name="Woyke T."/>
            <person name="Pitluck S."/>
            <person name="Pennacchio L."/>
            <person name="Nolan M."/>
            <person name="Mikhailova N."/>
            <person name="Lykidis A."/>
            <person name="Land M.L."/>
            <person name="Brettin T."/>
            <person name="Stetter K.O."/>
            <person name="Nelson K.E."/>
            <person name="Gogarten J.P."/>
            <person name="Noll K.M."/>
        </authorList>
    </citation>
    <scope>NUCLEOTIDE SEQUENCE [LARGE SCALE GENOMIC DNA]</scope>
    <source>
        <strain>RQ2</strain>
    </source>
</reference>
<evidence type="ECO:0000255" key="1">
    <source>
        <dbReference type="HAMAP-Rule" id="MF_01151"/>
    </source>
</evidence>
<gene>
    <name evidence="1" type="primary">grpE</name>
    <name type="ordered locus">TRQ2_0077</name>
</gene>